<evidence type="ECO:0000255" key="1">
    <source>
        <dbReference type="HAMAP-Rule" id="MF_02002"/>
    </source>
</evidence>
<accession>A7ZVX4</accession>
<gene>
    <name evidence="1" type="primary">ileS</name>
    <name type="ordered locus">EcHS_A0028</name>
</gene>
<protein>
    <recommendedName>
        <fullName evidence="1">Isoleucine--tRNA ligase</fullName>
        <ecNumber evidence="1">6.1.1.5</ecNumber>
    </recommendedName>
    <alternativeName>
        <fullName evidence="1">Isoleucyl-tRNA synthetase</fullName>
        <shortName evidence="1">IleRS</shortName>
    </alternativeName>
</protein>
<feature type="chain" id="PRO_1000070888" description="Isoleucine--tRNA ligase">
    <location>
        <begin position="1"/>
        <end position="938"/>
    </location>
</feature>
<feature type="short sequence motif" description="'HIGH' region">
    <location>
        <begin position="58"/>
        <end position="68"/>
    </location>
</feature>
<feature type="short sequence motif" description="'KMSKS' region">
    <location>
        <begin position="602"/>
        <end position="606"/>
    </location>
</feature>
<feature type="binding site" evidence="1">
    <location>
        <position position="561"/>
    </location>
    <ligand>
        <name>L-isoleucyl-5'-AMP</name>
        <dbReference type="ChEBI" id="CHEBI:178002"/>
    </ligand>
</feature>
<feature type="binding site" evidence="1">
    <location>
        <position position="605"/>
    </location>
    <ligand>
        <name>ATP</name>
        <dbReference type="ChEBI" id="CHEBI:30616"/>
    </ligand>
</feature>
<feature type="binding site" evidence="1">
    <location>
        <position position="901"/>
    </location>
    <ligand>
        <name>Zn(2+)</name>
        <dbReference type="ChEBI" id="CHEBI:29105"/>
    </ligand>
</feature>
<feature type="binding site" evidence="1">
    <location>
        <position position="904"/>
    </location>
    <ligand>
        <name>Zn(2+)</name>
        <dbReference type="ChEBI" id="CHEBI:29105"/>
    </ligand>
</feature>
<feature type="binding site" evidence="1">
    <location>
        <position position="921"/>
    </location>
    <ligand>
        <name>Zn(2+)</name>
        <dbReference type="ChEBI" id="CHEBI:29105"/>
    </ligand>
</feature>
<feature type="binding site" evidence="1">
    <location>
        <position position="924"/>
    </location>
    <ligand>
        <name>Zn(2+)</name>
        <dbReference type="ChEBI" id="CHEBI:29105"/>
    </ligand>
</feature>
<feature type="modified residue" description="N6-acetyllysine" evidence="1">
    <location>
        <position position="183"/>
    </location>
</feature>
<reference key="1">
    <citation type="journal article" date="2008" name="J. Bacteriol.">
        <title>The pangenome structure of Escherichia coli: comparative genomic analysis of E. coli commensal and pathogenic isolates.</title>
        <authorList>
            <person name="Rasko D.A."/>
            <person name="Rosovitz M.J."/>
            <person name="Myers G.S.A."/>
            <person name="Mongodin E.F."/>
            <person name="Fricke W.F."/>
            <person name="Gajer P."/>
            <person name="Crabtree J."/>
            <person name="Sebaihia M."/>
            <person name="Thomson N.R."/>
            <person name="Chaudhuri R."/>
            <person name="Henderson I.R."/>
            <person name="Sperandio V."/>
            <person name="Ravel J."/>
        </authorList>
    </citation>
    <scope>NUCLEOTIDE SEQUENCE [LARGE SCALE GENOMIC DNA]</scope>
    <source>
        <strain>HS</strain>
    </source>
</reference>
<name>SYI_ECOHS</name>
<keyword id="KW-0007">Acetylation</keyword>
<keyword id="KW-0030">Aminoacyl-tRNA synthetase</keyword>
<keyword id="KW-0067">ATP-binding</keyword>
<keyword id="KW-0963">Cytoplasm</keyword>
<keyword id="KW-0436">Ligase</keyword>
<keyword id="KW-0479">Metal-binding</keyword>
<keyword id="KW-0547">Nucleotide-binding</keyword>
<keyword id="KW-0648">Protein biosynthesis</keyword>
<keyword id="KW-0862">Zinc</keyword>
<comment type="function">
    <text evidence="1">Catalyzes the attachment of isoleucine to tRNA(Ile). As IleRS can inadvertently accommodate and process structurally similar amino acids such as valine, to avoid such errors it has two additional distinct tRNA(Ile)-dependent editing activities. One activity is designated as 'pretransfer' editing and involves the hydrolysis of activated Val-AMP. The other activity is designated 'posttransfer' editing and involves deacylation of mischarged Val-tRNA(Ile).</text>
</comment>
<comment type="catalytic activity">
    <reaction evidence="1">
        <text>tRNA(Ile) + L-isoleucine + ATP = L-isoleucyl-tRNA(Ile) + AMP + diphosphate</text>
        <dbReference type="Rhea" id="RHEA:11060"/>
        <dbReference type="Rhea" id="RHEA-COMP:9666"/>
        <dbReference type="Rhea" id="RHEA-COMP:9695"/>
        <dbReference type="ChEBI" id="CHEBI:30616"/>
        <dbReference type="ChEBI" id="CHEBI:33019"/>
        <dbReference type="ChEBI" id="CHEBI:58045"/>
        <dbReference type="ChEBI" id="CHEBI:78442"/>
        <dbReference type="ChEBI" id="CHEBI:78528"/>
        <dbReference type="ChEBI" id="CHEBI:456215"/>
        <dbReference type="EC" id="6.1.1.5"/>
    </reaction>
</comment>
<comment type="cofactor">
    <cofactor evidence="1">
        <name>Zn(2+)</name>
        <dbReference type="ChEBI" id="CHEBI:29105"/>
    </cofactor>
    <text evidence="1">Binds 1 zinc ion per subunit.</text>
</comment>
<comment type="subunit">
    <text evidence="1">Monomer.</text>
</comment>
<comment type="subcellular location">
    <subcellularLocation>
        <location evidence="1">Cytoplasm</location>
    </subcellularLocation>
</comment>
<comment type="domain">
    <text evidence="1">IleRS has two distinct active sites: one for aminoacylation and one for editing. The misactivated valine is translocated from the active site to the editing site, which sterically excludes the correctly activated isoleucine. The single editing site contains two valyl binding pockets, one specific for each substrate (Val-AMP or Val-tRNA(Ile)).</text>
</comment>
<comment type="similarity">
    <text evidence="1">Belongs to the class-I aminoacyl-tRNA synthetase family. IleS type 1 subfamily.</text>
</comment>
<organism>
    <name type="scientific">Escherichia coli O9:H4 (strain HS)</name>
    <dbReference type="NCBI Taxonomy" id="331112"/>
    <lineage>
        <taxon>Bacteria</taxon>
        <taxon>Pseudomonadati</taxon>
        <taxon>Pseudomonadota</taxon>
        <taxon>Gammaproteobacteria</taxon>
        <taxon>Enterobacterales</taxon>
        <taxon>Enterobacteriaceae</taxon>
        <taxon>Escherichia</taxon>
    </lineage>
</organism>
<proteinExistence type="inferred from homology"/>
<sequence>MSDYKSTLNLPETGFPMRGDLAKREPGMLARWTDDDLYGIIRAAKKGKKTFILHDGPPYANGSIHIGHSVNKILKDIIVKSKGLSGYDSPYVPGWDCHGLPIELKVEQEYGKPGEKFTAAEFRAKCREYAATQVDGQRKDFIRLGVLGDWSHPYLTMDFKTEANIIRALGKIIGNGHLHKGAKPVHWCVDCRSALAEAEVEYYDKTSLSIDVAFQAVDQDALKAKFAVSNVNGPISLVIWTTTPWTLPANRAISIAPDFDYALVQIDGQAVILAKDLVESVMQRIGVTDYTILGTVKGAELELLRFTHPFMGFDVPAILGDHVTLDAGTGAVHTAPGHGPDDYVIGQKYGLETANPVGPDGTYLPGTYPTLDGVNVFKANDIVVALLQEKGALLHVEKMQHSYPCCWRHKTPIIFRATPQWFVSMDQKGLRAQSLKEIKGVQWIPDWGQARIESMVANRPDWCISRQRTWGVPMSLFVHKDTEELHPRTLELMEEVAKRVEVDGIQAWWDLDAKEILGDEADQYVKVPDTLDVWFDSGSTHSSVVDVRPEFAGHAADMYLEGSDQHRGWFMSSLMISTAMKGKAPYRQVLTHGFTVDGQGRKMSKSIGNTVSPQDVMNKLGADILRLWVASTDYTGEMAVSDEILKRAADSYRRIRNTARFLLANLNGFDPAKDMVKPEEMVVLDRWAVGCAKAAQEDILKAYEAYDFHEVVQRLMRFCSVEMGSFYLDIIKDRQYTAKADSVARRSCQTALYHIAEALVRWMAPILSFTADEVWGYLPGEREKYVFTGEWYEGLFGLADSEAMNDAFWDELLKVRGEVNKVIEQARADKKVGGSLEAAVTLYAEPELSAKLTALGDELRFVLLTSGATVADYNDAPADAQQSEVLKGLKVALSKAEGEKCPRCWHYTQDVGKVAEHAEICGRCVSNVAGDGEKRKFA</sequence>
<dbReference type="EC" id="6.1.1.5" evidence="1"/>
<dbReference type="EMBL" id="CP000802">
    <property type="protein sequence ID" value="ABV04428.1"/>
    <property type="molecule type" value="Genomic_DNA"/>
</dbReference>
<dbReference type="RefSeq" id="WP_001286836.1">
    <property type="nucleotide sequence ID" value="NC_009800.1"/>
</dbReference>
<dbReference type="SMR" id="A7ZVX4"/>
<dbReference type="KEGG" id="ecx:EcHS_A0028"/>
<dbReference type="HOGENOM" id="CLU_001493_7_1_6"/>
<dbReference type="GO" id="GO:0005829">
    <property type="term" value="C:cytosol"/>
    <property type="evidence" value="ECO:0007669"/>
    <property type="project" value="TreeGrafter"/>
</dbReference>
<dbReference type="GO" id="GO:0002161">
    <property type="term" value="F:aminoacyl-tRNA deacylase activity"/>
    <property type="evidence" value="ECO:0007669"/>
    <property type="project" value="InterPro"/>
</dbReference>
<dbReference type="GO" id="GO:0005524">
    <property type="term" value="F:ATP binding"/>
    <property type="evidence" value="ECO:0007669"/>
    <property type="project" value="UniProtKB-UniRule"/>
</dbReference>
<dbReference type="GO" id="GO:0004822">
    <property type="term" value="F:isoleucine-tRNA ligase activity"/>
    <property type="evidence" value="ECO:0007669"/>
    <property type="project" value="UniProtKB-UniRule"/>
</dbReference>
<dbReference type="GO" id="GO:0000049">
    <property type="term" value="F:tRNA binding"/>
    <property type="evidence" value="ECO:0007669"/>
    <property type="project" value="InterPro"/>
</dbReference>
<dbReference type="GO" id="GO:0008270">
    <property type="term" value="F:zinc ion binding"/>
    <property type="evidence" value="ECO:0007669"/>
    <property type="project" value="UniProtKB-UniRule"/>
</dbReference>
<dbReference type="GO" id="GO:0006428">
    <property type="term" value="P:isoleucyl-tRNA aminoacylation"/>
    <property type="evidence" value="ECO:0007669"/>
    <property type="project" value="UniProtKB-UniRule"/>
</dbReference>
<dbReference type="CDD" id="cd07960">
    <property type="entry name" value="Anticodon_Ia_Ile_BEm"/>
    <property type="match status" value="1"/>
</dbReference>
<dbReference type="CDD" id="cd00818">
    <property type="entry name" value="IleRS_core"/>
    <property type="match status" value="1"/>
</dbReference>
<dbReference type="FunFam" id="1.10.730.20:FF:000001">
    <property type="entry name" value="Isoleucine--tRNA ligase"/>
    <property type="match status" value="1"/>
</dbReference>
<dbReference type="FunFam" id="3.40.50.620:FF:000042">
    <property type="entry name" value="Isoleucine--tRNA ligase"/>
    <property type="match status" value="1"/>
</dbReference>
<dbReference type="FunFam" id="3.40.50.620:FF:000048">
    <property type="entry name" value="Isoleucine--tRNA ligase"/>
    <property type="match status" value="1"/>
</dbReference>
<dbReference type="FunFam" id="3.90.740.10:FF:000002">
    <property type="entry name" value="Isoleucine--tRNA ligase"/>
    <property type="match status" value="1"/>
</dbReference>
<dbReference type="Gene3D" id="1.10.730.20">
    <property type="match status" value="1"/>
</dbReference>
<dbReference type="Gene3D" id="3.40.50.620">
    <property type="entry name" value="HUPs"/>
    <property type="match status" value="2"/>
</dbReference>
<dbReference type="Gene3D" id="3.90.740.10">
    <property type="entry name" value="Valyl/Leucyl/Isoleucyl-tRNA synthetase, editing domain"/>
    <property type="match status" value="1"/>
</dbReference>
<dbReference type="HAMAP" id="MF_02002">
    <property type="entry name" value="Ile_tRNA_synth_type1"/>
    <property type="match status" value="1"/>
</dbReference>
<dbReference type="InterPro" id="IPR001412">
    <property type="entry name" value="aa-tRNA-synth_I_CS"/>
</dbReference>
<dbReference type="InterPro" id="IPR002300">
    <property type="entry name" value="aa-tRNA-synth_Ia"/>
</dbReference>
<dbReference type="InterPro" id="IPR033708">
    <property type="entry name" value="Anticodon_Ile_BEm"/>
</dbReference>
<dbReference type="InterPro" id="IPR002301">
    <property type="entry name" value="Ile-tRNA-ligase"/>
</dbReference>
<dbReference type="InterPro" id="IPR023585">
    <property type="entry name" value="Ile-tRNA-ligase_type1"/>
</dbReference>
<dbReference type="InterPro" id="IPR050081">
    <property type="entry name" value="Ile-tRNA_ligase"/>
</dbReference>
<dbReference type="InterPro" id="IPR013155">
    <property type="entry name" value="M/V/L/I-tRNA-synth_anticd-bd"/>
</dbReference>
<dbReference type="InterPro" id="IPR014729">
    <property type="entry name" value="Rossmann-like_a/b/a_fold"/>
</dbReference>
<dbReference type="InterPro" id="IPR009080">
    <property type="entry name" value="tRNAsynth_Ia_anticodon-bd"/>
</dbReference>
<dbReference type="InterPro" id="IPR009008">
    <property type="entry name" value="Val/Leu/Ile-tRNA-synth_edit"/>
</dbReference>
<dbReference type="InterPro" id="IPR010663">
    <property type="entry name" value="Znf_FPG/IleRS"/>
</dbReference>
<dbReference type="NCBIfam" id="TIGR00392">
    <property type="entry name" value="ileS"/>
    <property type="match status" value="1"/>
</dbReference>
<dbReference type="PANTHER" id="PTHR42765:SF1">
    <property type="entry name" value="ISOLEUCINE--TRNA LIGASE, MITOCHONDRIAL"/>
    <property type="match status" value="1"/>
</dbReference>
<dbReference type="PANTHER" id="PTHR42765">
    <property type="entry name" value="SOLEUCYL-TRNA SYNTHETASE"/>
    <property type="match status" value="1"/>
</dbReference>
<dbReference type="Pfam" id="PF08264">
    <property type="entry name" value="Anticodon_1"/>
    <property type="match status" value="1"/>
</dbReference>
<dbReference type="Pfam" id="PF00133">
    <property type="entry name" value="tRNA-synt_1"/>
    <property type="match status" value="1"/>
</dbReference>
<dbReference type="Pfam" id="PF06827">
    <property type="entry name" value="zf-FPG_IleRS"/>
    <property type="match status" value="1"/>
</dbReference>
<dbReference type="PRINTS" id="PR00984">
    <property type="entry name" value="TRNASYNTHILE"/>
</dbReference>
<dbReference type="SUPFAM" id="SSF47323">
    <property type="entry name" value="Anticodon-binding domain of a subclass of class I aminoacyl-tRNA synthetases"/>
    <property type="match status" value="1"/>
</dbReference>
<dbReference type="SUPFAM" id="SSF52374">
    <property type="entry name" value="Nucleotidylyl transferase"/>
    <property type="match status" value="1"/>
</dbReference>
<dbReference type="SUPFAM" id="SSF50677">
    <property type="entry name" value="ValRS/IleRS/LeuRS editing domain"/>
    <property type="match status" value="1"/>
</dbReference>
<dbReference type="PROSITE" id="PS00178">
    <property type="entry name" value="AA_TRNA_LIGASE_I"/>
    <property type="match status" value="1"/>
</dbReference>